<proteinExistence type="inferred from homology"/>
<evidence type="ECO:0000250" key="1">
    <source>
        <dbReference type="UniProtKB" id="P00430"/>
    </source>
</evidence>
<evidence type="ECO:0000250" key="2">
    <source>
        <dbReference type="UniProtKB" id="P04039"/>
    </source>
</evidence>
<evidence type="ECO:0000250" key="3">
    <source>
        <dbReference type="UniProtKB" id="P15954"/>
    </source>
</evidence>
<evidence type="ECO:0000250" key="4">
    <source>
        <dbReference type="UniProtKB" id="P17665"/>
    </source>
</evidence>
<evidence type="ECO:0000305" key="5"/>
<protein>
    <recommendedName>
        <fullName>Cytochrome c oxidase subunit 7C, mitochondrial</fullName>
    </recommendedName>
    <alternativeName>
        <fullName>Cytochrome c oxidase polypeptide VIIc</fullName>
    </alternativeName>
</protein>
<dbReference type="EMBL" id="AB072313">
    <property type="protein sequence ID" value="BAB86871.1"/>
    <property type="molecule type" value="Genomic_DNA"/>
</dbReference>
<dbReference type="RefSeq" id="NP_001073391.1">
    <property type="nucleotide sequence ID" value="NM_001079922.2"/>
</dbReference>
<dbReference type="SMR" id="P60025"/>
<dbReference type="FunCoup" id="P60025">
    <property type="interactions" value="836"/>
</dbReference>
<dbReference type="STRING" id="9598.ENSPTRP00000051053"/>
<dbReference type="PaxDb" id="9598-ENSPTRP00000029203"/>
<dbReference type="Ensembl" id="ENSPTRT00000058107.2">
    <property type="protein sequence ID" value="ENSPTRP00000051053.1"/>
    <property type="gene ID" value="ENSPTRG00000017060.3"/>
</dbReference>
<dbReference type="Ensembl" id="ENSPTRT00000092255.1">
    <property type="protein sequence ID" value="ENSPTRP00000064310.1"/>
    <property type="gene ID" value="ENSPTRG00000048661.1"/>
</dbReference>
<dbReference type="GeneID" id="739452"/>
<dbReference type="GeneID" id="740780"/>
<dbReference type="KEGG" id="ptr:739452"/>
<dbReference type="KEGG" id="ptr:740780"/>
<dbReference type="CTD" id="1350"/>
<dbReference type="eggNOG" id="KOG4527">
    <property type="taxonomic scope" value="Eukaryota"/>
</dbReference>
<dbReference type="GeneTree" id="ENSGT00390000018086"/>
<dbReference type="HOGENOM" id="CLU_194769_0_0_1"/>
<dbReference type="InParanoid" id="P60025"/>
<dbReference type="OMA" id="SIENKWR"/>
<dbReference type="OrthoDB" id="677at9604"/>
<dbReference type="TreeFam" id="TF105069"/>
<dbReference type="UniPathway" id="UPA00705"/>
<dbReference type="Proteomes" id="UP000002277">
    <property type="component" value="Chromosome 3"/>
</dbReference>
<dbReference type="Proteomes" id="UP000002277">
    <property type="component" value="Chromosome 5"/>
</dbReference>
<dbReference type="Bgee" id="ENSPTRG00000017060">
    <property type="expression patterns" value="Expressed in bone marrow and 11 other cell types or tissues"/>
</dbReference>
<dbReference type="GO" id="GO:0005743">
    <property type="term" value="C:mitochondrial inner membrane"/>
    <property type="evidence" value="ECO:0007669"/>
    <property type="project" value="UniProtKB-SubCell"/>
</dbReference>
<dbReference type="GO" id="GO:0045277">
    <property type="term" value="C:respiratory chain complex IV"/>
    <property type="evidence" value="ECO:0007669"/>
    <property type="project" value="InterPro"/>
</dbReference>
<dbReference type="GO" id="GO:0006123">
    <property type="term" value="P:mitochondrial electron transport, cytochrome c to oxygen"/>
    <property type="evidence" value="ECO:0000318"/>
    <property type="project" value="GO_Central"/>
</dbReference>
<dbReference type="CDD" id="cd00929">
    <property type="entry name" value="Cyt_c_Oxidase_VIIc"/>
    <property type="match status" value="1"/>
</dbReference>
<dbReference type="FunFam" id="4.10.49.10:FF:000001">
    <property type="entry name" value="Cytochrome c oxidase subunit 7C"/>
    <property type="match status" value="1"/>
</dbReference>
<dbReference type="Gene3D" id="4.10.49.10">
    <property type="entry name" value="Cytochrome c oxidase subunit VIIc"/>
    <property type="match status" value="1"/>
</dbReference>
<dbReference type="InterPro" id="IPR004202">
    <property type="entry name" value="COX7C/Cox8"/>
</dbReference>
<dbReference type="InterPro" id="IPR036636">
    <property type="entry name" value="COX7C/Cox8_sf"/>
</dbReference>
<dbReference type="PANTHER" id="PTHR13313:SF1">
    <property type="entry name" value="CYTOCHROME C OXIDASE SUBUNIT 7C, MITOCHONDRIAL"/>
    <property type="match status" value="1"/>
</dbReference>
<dbReference type="PANTHER" id="PTHR13313">
    <property type="entry name" value="CYTOCHROME C OXIDASE SUBUNIT VIIC"/>
    <property type="match status" value="1"/>
</dbReference>
<dbReference type="Pfam" id="PF02935">
    <property type="entry name" value="COX7C"/>
    <property type="match status" value="1"/>
</dbReference>
<dbReference type="SUPFAM" id="SSF81427">
    <property type="entry name" value="Mitochondrial cytochrome c oxidase subunit VIIc (aka VIIIa)"/>
    <property type="match status" value="1"/>
</dbReference>
<organism>
    <name type="scientific">Pan troglodytes</name>
    <name type="common">Chimpanzee</name>
    <dbReference type="NCBI Taxonomy" id="9598"/>
    <lineage>
        <taxon>Eukaryota</taxon>
        <taxon>Metazoa</taxon>
        <taxon>Chordata</taxon>
        <taxon>Craniata</taxon>
        <taxon>Vertebrata</taxon>
        <taxon>Euteleostomi</taxon>
        <taxon>Mammalia</taxon>
        <taxon>Eutheria</taxon>
        <taxon>Euarchontoglires</taxon>
        <taxon>Primates</taxon>
        <taxon>Haplorrhini</taxon>
        <taxon>Catarrhini</taxon>
        <taxon>Hominidae</taxon>
        <taxon>Pan</taxon>
    </lineage>
</organism>
<comment type="function">
    <text evidence="2">Component of the cytochrome c oxidase, the last enzyme in the mitochondrial electron transport chain which drives oxidative phosphorylation. The respiratory chain contains 3 multisubunit complexes succinate dehydrogenase (complex II, CII), ubiquinol-cytochrome c oxidoreductase (cytochrome b-c1 complex, complex III, CIII) and cytochrome c oxidase (complex IV, CIV), that cooperate to transfer electrons derived from NADH and succinate to molecular oxygen, creating an electrochemical gradient over the inner membrane that drives transmembrane transport and the ATP synthase. Cytochrome c oxidase is the component of the respiratory chain that catalyzes the reduction of oxygen to water. Electrons originating from reduced cytochrome c in the intermembrane space (IMS) are transferred via the dinuclear copper A center (CU(A)) of subunit 2 and heme A of subunit 1 to the active site in subunit 1, a binuclear center (BNC) formed by heme A3 and copper B (CU(B)). The BNC reduces molecular oxygen to 2 water molecules using 4 electrons from cytochrome c in the IMS and 4 protons from the mitochondrial matrix.</text>
</comment>
<comment type="pathway">
    <text evidence="2">Energy metabolism; oxidative phosphorylation.</text>
</comment>
<comment type="subunit">
    <text evidence="1 3">Component of the cytochrome c oxidase (complex IV, CIV), a multisubunit enzyme composed of 14 subunits. The complex is composed of a catalytic core of 3 subunits MT-CO1, MT-CO2 and MT-CO3, encoded in the mitochondrial DNA, and 11 supernumerary subunits COX4I, COX5A, COX5B, COX6A, COX6B, COX6C, COX7A, COX7B, COX7C, COX8 and NDUFA4, which are encoded in the nuclear genome. The complex exists as a monomer or a dimer and forms supercomplexes (SCs) in the inner mitochondrial membrane with NADH-ubiquinone oxidoreductase (complex I, CI) and ubiquinol-cytochrome c oxidoreductase (cytochrome b-c1 complex, complex III, CIII), resulting in different assemblies (supercomplex SCI(1)III(2)IV(1) and megacomplex MCI(2)III(2)IV(2)) (By similarity). Interacts with RAB5IF (By similarity).</text>
</comment>
<comment type="subcellular location">
    <subcellularLocation>
        <location evidence="1">Mitochondrion inner membrane</location>
        <topology evidence="1">Single-pass membrane protein</topology>
    </subcellularLocation>
</comment>
<comment type="similarity">
    <text evidence="5">Belongs to the cytochrome c oxidase VIIc family.</text>
</comment>
<reference key="1">
    <citation type="journal article" date="2002" name="Genomics">
        <title>Search for genes positively selected during primate evolution by 5'-end-sequence screening of cynomolgus monkey cDNAs.</title>
        <authorList>
            <person name="Osada N."/>
            <person name="Kusuda J."/>
            <person name="Hirata M."/>
            <person name="Tanuma R."/>
            <person name="Hida M."/>
            <person name="Sugano S."/>
            <person name="Hirai M."/>
            <person name="Hashimoto K."/>
        </authorList>
    </citation>
    <scope>NUCLEOTIDE SEQUENCE [GENOMIC DNA]</scope>
</reference>
<feature type="transit peptide" description="Mitochondrion" evidence="1">
    <location>
        <begin position="1"/>
        <end position="16"/>
    </location>
</feature>
<feature type="chain" id="PRO_0000006168" description="Cytochrome c oxidase subunit 7C, mitochondrial">
    <location>
        <begin position="17"/>
        <end position="63"/>
    </location>
</feature>
<feature type="topological domain" description="Mitochondrial matrix" evidence="1">
    <location>
        <begin position="17"/>
        <end position="33"/>
    </location>
</feature>
<feature type="transmembrane region" description="Helical" evidence="1">
    <location>
        <begin position="34"/>
        <end position="60"/>
    </location>
</feature>
<feature type="topological domain" description="Mitochondrial intermembrane" evidence="1">
    <location>
        <begin position="61"/>
        <end position="63"/>
    </location>
</feature>
<feature type="modified residue" description="N6-acetyllysine; alternate" evidence="4">
    <location>
        <position position="25"/>
    </location>
</feature>
<feature type="modified residue" description="N6-succinyllysine; alternate" evidence="4">
    <location>
        <position position="25"/>
    </location>
</feature>
<gene>
    <name type="primary">COX7C</name>
</gene>
<name>COX7C_PANTR</name>
<accession>P60025</accession>
<sequence>MLGQSIRRFTTSVVRRSHYEEGPGKNLPFSVENKWSLLAKMCLYFGSAFATPFLVVRHQLLKT</sequence>
<keyword id="KW-0007">Acetylation</keyword>
<keyword id="KW-0472">Membrane</keyword>
<keyword id="KW-0496">Mitochondrion</keyword>
<keyword id="KW-0999">Mitochondrion inner membrane</keyword>
<keyword id="KW-1185">Reference proteome</keyword>
<keyword id="KW-0809">Transit peptide</keyword>
<keyword id="KW-0812">Transmembrane</keyword>
<keyword id="KW-1133">Transmembrane helix</keyword>